<gene>
    <name evidence="1" type="primary">gatB</name>
    <name type="ordered locus">BURPS1710b_0369</name>
</gene>
<reference key="1">
    <citation type="journal article" date="2010" name="Genome Biol. Evol.">
        <title>Continuing evolution of Burkholderia mallei through genome reduction and large-scale rearrangements.</title>
        <authorList>
            <person name="Losada L."/>
            <person name="Ronning C.M."/>
            <person name="DeShazer D."/>
            <person name="Woods D."/>
            <person name="Fedorova N."/>
            <person name="Kim H.S."/>
            <person name="Shabalina S.A."/>
            <person name="Pearson T.R."/>
            <person name="Brinkac L."/>
            <person name="Tan P."/>
            <person name="Nandi T."/>
            <person name="Crabtree J."/>
            <person name="Badger J."/>
            <person name="Beckstrom-Sternberg S."/>
            <person name="Saqib M."/>
            <person name="Schutzer S.E."/>
            <person name="Keim P."/>
            <person name="Nierman W.C."/>
        </authorList>
    </citation>
    <scope>NUCLEOTIDE SEQUENCE [LARGE SCALE GENOMIC DNA]</scope>
    <source>
        <strain>1710b</strain>
    </source>
</reference>
<dbReference type="EC" id="6.3.5.-" evidence="1"/>
<dbReference type="EMBL" id="CP000124">
    <property type="protein sequence ID" value="ABA47986.1"/>
    <property type="molecule type" value="Genomic_DNA"/>
</dbReference>
<dbReference type="RefSeq" id="WP_004523090.1">
    <property type="nucleotide sequence ID" value="NC_007434.1"/>
</dbReference>
<dbReference type="SMR" id="Q3JXC0"/>
<dbReference type="EnsemblBacteria" id="ABA47986">
    <property type="protein sequence ID" value="ABA47986"/>
    <property type="gene ID" value="BURPS1710b_0369"/>
</dbReference>
<dbReference type="GeneID" id="93058697"/>
<dbReference type="KEGG" id="bpm:BURPS1710b_0369"/>
<dbReference type="HOGENOM" id="CLU_019240_0_0_4"/>
<dbReference type="Proteomes" id="UP000002700">
    <property type="component" value="Chromosome I"/>
</dbReference>
<dbReference type="GO" id="GO:0050566">
    <property type="term" value="F:asparaginyl-tRNA synthase (glutamine-hydrolyzing) activity"/>
    <property type="evidence" value="ECO:0007669"/>
    <property type="project" value="RHEA"/>
</dbReference>
<dbReference type="GO" id="GO:0005524">
    <property type="term" value="F:ATP binding"/>
    <property type="evidence" value="ECO:0007669"/>
    <property type="project" value="UniProtKB-KW"/>
</dbReference>
<dbReference type="GO" id="GO:0050567">
    <property type="term" value="F:glutaminyl-tRNA synthase (glutamine-hydrolyzing) activity"/>
    <property type="evidence" value="ECO:0007669"/>
    <property type="project" value="UniProtKB-UniRule"/>
</dbReference>
<dbReference type="GO" id="GO:0070681">
    <property type="term" value="P:glutaminyl-tRNAGln biosynthesis via transamidation"/>
    <property type="evidence" value="ECO:0007669"/>
    <property type="project" value="TreeGrafter"/>
</dbReference>
<dbReference type="GO" id="GO:0006412">
    <property type="term" value="P:translation"/>
    <property type="evidence" value="ECO:0007669"/>
    <property type="project" value="UniProtKB-UniRule"/>
</dbReference>
<dbReference type="FunFam" id="1.10.10.410:FF:000001">
    <property type="entry name" value="Aspartyl/glutamyl-tRNA(Asn/Gln) amidotransferase subunit B"/>
    <property type="match status" value="1"/>
</dbReference>
<dbReference type="FunFam" id="1.10.150.380:FF:000001">
    <property type="entry name" value="Aspartyl/glutamyl-tRNA(Asn/Gln) amidotransferase subunit B"/>
    <property type="match status" value="1"/>
</dbReference>
<dbReference type="Gene3D" id="1.10.10.410">
    <property type="match status" value="1"/>
</dbReference>
<dbReference type="Gene3D" id="1.10.150.380">
    <property type="entry name" value="GatB domain, N-terminal subdomain"/>
    <property type="match status" value="1"/>
</dbReference>
<dbReference type="HAMAP" id="MF_00121">
    <property type="entry name" value="GatB"/>
    <property type="match status" value="1"/>
</dbReference>
<dbReference type="InterPro" id="IPR017959">
    <property type="entry name" value="Asn/Gln-tRNA_amidoTrfase_suB/E"/>
</dbReference>
<dbReference type="InterPro" id="IPR006075">
    <property type="entry name" value="Asn/Gln-tRNA_Trfase_suB/E_cat"/>
</dbReference>
<dbReference type="InterPro" id="IPR018027">
    <property type="entry name" value="Asn/Gln_amidotransferase"/>
</dbReference>
<dbReference type="InterPro" id="IPR003789">
    <property type="entry name" value="Asn/Gln_tRNA_amidoTrase-B-like"/>
</dbReference>
<dbReference type="InterPro" id="IPR004413">
    <property type="entry name" value="GatB"/>
</dbReference>
<dbReference type="InterPro" id="IPR042114">
    <property type="entry name" value="GatB_C_1"/>
</dbReference>
<dbReference type="InterPro" id="IPR023168">
    <property type="entry name" value="GatB_Yqey_C_2"/>
</dbReference>
<dbReference type="InterPro" id="IPR017958">
    <property type="entry name" value="Gln-tRNA_amidoTrfase_suB_CS"/>
</dbReference>
<dbReference type="InterPro" id="IPR014746">
    <property type="entry name" value="Gln_synth/guanido_kin_cat_dom"/>
</dbReference>
<dbReference type="NCBIfam" id="TIGR00133">
    <property type="entry name" value="gatB"/>
    <property type="match status" value="1"/>
</dbReference>
<dbReference type="NCBIfam" id="NF004012">
    <property type="entry name" value="PRK05477.1-2"/>
    <property type="match status" value="1"/>
</dbReference>
<dbReference type="NCBIfam" id="NF004014">
    <property type="entry name" value="PRK05477.1-4"/>
    <property type="match status" value="1"/>
</dbReference>
<dbReference type="NCBIfam" id="NF004015">
    <property type="entry name" value="PRK05477.1-5"/>
    <property type="match status" value="1"/>
</dbReference>
<dbReference type="PANTHER" id="PTHR11659">
    <property type="entry name" value="GLUTAMYL-TRNA GLN AMIDOTRANSFERASE SUBUNIT B MITOCHONDRIAL AND PROKARYOTIC PET112-RELATED"/>
    <property type="match status" value="1"/>
</dbReference>
<dbReference type="PANTHER" id="PTHR11659:SF0">
    <property type="entry name" value="GLUTAMYL-TRNA(GLN) AMIDOTRANSFERASE SUBUNIT B, MITOCHONDRIAL"/>
    <property type="match status" value="1"/>
</dbReference>
<dbReference type="Pfam" id="PF02934">
    <property type="entry name" value="GatB_N"/>
    <property type="match status" value="1"/>
</dbReference>
<dbReference type="Pfam" id="PF02637">
    <property type="entry name" value="GatB_Yqey"/>
    <property type="match status" value="1"/>
</dbReference>
<dbReference type="SMART" id="SM00845">
    <property type="entry name" value="GatB_Yqey"/>
    <property type="match status" value="1"/>
</dbReference>
<dbReference type="SUPFAM" id="SSF89095">
    <property type="entry name" value="GatB/YqeY motif"/>
    <property type="match status" value="1"/>
</dbReference>
<dbReference type="SUPFAM" id="SSF55931">
    <property type="entry name" value="Glutamine synthetase/guanido kinase"/>
    <property type="match status" value="1"/>
</dbReference>
<dbReference type="PROSITE" id="PS01234">
    <property type="entry name" value="GATB"/>
    <property type="match status" value="1"/>
</dbReference>
<keyword id="KW-0067">ATP-binding</keyword>
<keyword id="KW-0436">Ligase</keyword>
<keyword id="KW-0547">Nucleotide-binding</keyword>
<keyword id="KW-0648">Protein biosynthesis</keyword>
<evidence type="ECO:0000255" key="1">
    <source>
        <dbReference type="HAMAP-Rule" id="MF_00121"/>
    </source>
</evidence>
<organism>
    <name type="scientific">Burkholderia pseudomallei (strain 1710b)</name>
    <dbReference type="NCBI Taxonomy" id="320372"/>
    <lineage>
        <taxon>Bacteria</taxon>
        <taxon>Pseudomonadati</taxon>
        <taxon>Pseudomonadota</taxon>
        <taxon>Betaproteobacteria</taxon>
        <taxon>Burkholderiales</taxon>
        <taxon>Burkholderiaceae</taxon>
        <taxon>Burkholderia</taxon>
        <taxon>pseudomallei group</taxon>
    </lineage>
</organism>
<comment type="function">
    <text evidence="1">Allows the formation of correctly charged Asn-tRNA(Asn) or Gln-tRNA(Gln) through the transamidation of misacylated Asp-tRNA(Asn) or Glu-tRNA(Gln) in organisms which lack either or both of asparaginyl-tRNA or glutaminyl-tRNA synthetases. The reaction takes place in the presence of glutamine and ATP through an activated phospho-Asp-tRNA(Asn) or phospho-Glu-tRNA(Gln).</text>
</comment>
<comment type="catalytic activity">
    <reaction evidence="1">
        <text>L-glutamyl-tRNA(Gln) + L-glutamine + ATP + H2O = L-glutaminyl-tRNA(Gln) + L-glutamate + ADP + phosphate + H(+)</text>
        <dbReference type="Rhea" id="RHEA:17521"/>
        <dbReference type="Rhea" id="RHEA-COMP:9681"/>
        <dbReference type="Rhea" id="RHEA-COMP:9684"/>
        <dbReference type="ChEBI" id="CHEBI:15377"/>
        <dbReference type="ChEBI" id="CHEBI:15378"/>
        <dbReference type="ChEBI" id="CHEBI:29985"/>
        <dbReference type="ChEBI" id="CHEBI:30616"/>
        <dbReference type="ChEBI" id="CHEBI:43474"/>
        <dbReference type="ChEBI" id="CHEBI:58359"/>
        <dbReference type="ChEBI" id="CHEBI:78520"/>
        <dbReference type="ChEBI" id="CHEBI:78521"/>
        <dbReference type="ChEBI" id="CHEBI:456216"/>
    </reaction>
</comment>
<comment type="catalytic activity">
    <reaction evidence="1">
        <text>L-aspartyl-tRNA(Asn) + L-glutamine + ATP + H2O = L-asparaginyl-tRNA(Asn) + L-glutamate + ADP + phosphate + 2 H(+)</text>
        <dbReference type="Rhea" id="RHEA:14513"/>
        <dbReference type="Rhea" id="RHEA-COMP:9674"/>
        <dbReference type="Rhea" id="RHEA-COMP:9677"/>
        <dbReference type="ChEBI" id="CHEBI:15377"/>
        <dbReference type="ChEBI" id="CHEBI:15378"/>
        <dbReference type="ChEBI" id="CHEBI:29985"/>
        <dbReference type="ChEBI" id="CHEBI:30616"/>
        <dbReference type="ChEBI" id="CHEBI:43474"/>
        <dbReference type="ChEBI" id="CHEBI:58359"/>
        <dbReference type="ChEBI" id="CHEBI:78515"/>
        <dbReference type="ChEBI" id="CHEBI:78516"/>
        <dbReference type="ChEBI" id="CHEBI:456216"/>
    </reaction>
</comment>
<comment type="subunit">
    <text evidence="1">Heterotrimer of A, B and C subunits.</text>
</comment>
<comment type="similarity">
    <text evidence="1">Belongs to the GatB/GatE family. GatB subfamily.</text>
</comment>
<name>GATB_BURP1</name>
<feature type="chain" id="PRO_0000241204" description="Aspartyl/glutamyl-tRNA(Asn/Gln) amidotransferase subunit B">
    <location>
        <begin position="1"/>
        <end position="490"/>
    </location>
</feature>
<proteinExistence type="inferred from homology"/>
<accession>Q3JXC0</accession>
<sequence length="490" mass="53323">MTQWEVVIGLETHAQLSTVSKIFSGASTQFGAQPNTQACPVDLALPGVLPVLNRGAVERAIRFGLAIGATVAPRSVFARKNYFYPDLPKGYQISQYEIPVVQGGQITIQVPANEKAGKQAYSKTVNLTRAHLEEDAGKSLHEDFAGMTGIDLNRAGTPLLEIVTEPEMRSAAEAVAYAKALHGLVMWLGICDGNMQEGSFRCDANVSVRPVGQEKFGTRAEIKNLNSFRFLEDAINYEVRRQIELIEDGGEVVQETRLYDPDKRETRSMRSKEDAHDYRYFPDPDLMPLVIGADWIARVKGEMPELPAAMQQRFVEQYGVSAYDAGVLTSTKAMAEYFEALVAKAGAANAKLAANWLMGDVSSQLNRDGIDIDACPVSAAQLALVLQRIADGTISNKIAKEIFVTIWDEKAADEGAADRIIEAKGLKQISDTGALEAIIDEVLAANAKSVEEFRAGKDKAFNALVGQAMKATKGKANPQQVNELLKKKLG</sequence>
<protein>
    <recommendedName>
        <fullName evidence="1">Aspartyl/glutamyl-tRNA(Asn/Gln) amidotransferase subunit B</fullName>
        <shortName evidence="1">Asp/Glu-ADT subunit B</shortName>
        <ecNumber evidence="1">6.3.5.-</ecNumber>
    </recommendedName>
</protein>